<reference key="1">
    <citation type="journal article" date="2009" name="J. Bacteriol.">
        <title>Genomic sequencing reveals regulatory mutations and recombinational events in the widely used MC4100 lineage of Escherichia coli K-12.</title>
        <authorList>
            <person name="Ferenci T."/>
            <person name="Zhou Z."/>
            <person name="Betteridge T."/>
            <person name="Ren Y."/>
            <person name="Liu Y."/>
            <person name="Feng L."/>
            <person name="Reeves P.R."/>
            <person name="Wang L."/>
        </authorList>
    </citation>
    <scope>NUCLEOTIDE SEQUENCE [LARGE SCALE GENOMIC DNA]</scope>
    <source>
        <strain>K12 / MC4100 / BW2952</strain>
    </source>
</reference>
<sequence length="427" mass="49392">MTWFIDRRLNGKNKSMVNRQRFLRRYKAQIKQSISEAINKRSVTDVDSGESVSIPTEDISEPMFHQGRGGLRHRVHPGNDHFVQNDRIERPQGGGGGSGSGQGQASQDGEGQDEFVFQISKDEYLDLLFEDLALPNLKQNQQRQLTEYKTHRAGYTANGVPANISVVRSLQNSLARRTAMTAGKRRELHALEENLAIISNSEPAQLLEEERLRKEIAELRAKIERVPFIDTFDLRYKNYEKRPDPSSQAVMFCLMDVSGSMDQSTKDMAKRFYILLYLFLSRTYKNVEVVYIRHHTQAKEVDEHEFFYSQETGGTIVSSALKLMDEVVKERYNPAQWNIYAAQASDGDNWADDSPLCHEILAKKLLPVVRYYSYIEITRRAHQTLWREYEHLQSTFDNFAMQHIRDQDDIYPVFRELFHKQNATAKG</sequence>
<comment type="similarity">
    <text evidence="1">Belongs to the UPF0229 family.</text>
</comment>
<evidence type="ECO:0000255" key="1">
    <source>
        <dbReference type="HAMAP-Rule" id="MF_01232"/>
    </source>
</evidence>
<evidence type="ECO:0000256" key="2">
    <source>
        <dbReference type="SAM" id="MobiDB-lite"/>
    </source>
</evidence>
<feature type="chain" id="PRO_1000214026" description="UPF0229 protein YeaH">
    <location>
        <begin position="1"/>
        <end position="427"/>
    </location>
</feature>
<feature type="region of interest" description="Disordered" evidence="2">
    <location>
        <begin position="79"/>
        <end position="110"/>
    </location>
</feature>
<feature type="compositionally biased region" description="Basic and acidic residues" evidence="2">
    <location>
        <begin position="79"/>
        <end position="90"/>
    </location>
</feature>
<feature type="compositionally biased region" description="Gly residues" evidence="2">
    <location>
        <begin position="92"/>
        <end position="102"/>
    </location>
</feature>
<accession>C4ZZE0</accession>
<name>YEAH_ECOBW</name>
<organism>
    <name type="scientific">Escherichia coli (strain K12 / MC4100 / BW2952)</name>
    <dbReference type="NCBI Taxonomy" id="595496"/>
    <lineage>
        <taxon>Bacteria</taxon>
        <taxon>Pseudomonadati</taxon>
        <taxon>Pseudomonadota</taxon>
        <taxon>Gammaproteobacteria</taxon>
        <taxon>Enterobacterales</taxon>
        <taxon>Enterobacteriaceae</taxon>
        <taxon>Escherichia</taxon>
    </lineage>
</organism>
<protein>
    <recommendedName>
        <fullName evidence="1">UPF0229 protein YeaH</fullName>
    </recommendedName>
</protein>
<proteinExistence type="inferred from homology"/>
<dbReference type="EMBL" id="CP001396">
    <property type="protein sequence ID" value="ACR62488.1"/>
    <property type="molecule type" value="Genomic_DNA"/>
</dbReference>
<dbReference type="RefSeq" id="WP_000219687.1">
    <property type="nucleotide sequence ID" value="NC_012759.1"/>
</dbReference>
<dbReference type="SMR" id="C4ZZE0"/>
<dbReference type="KEGG" id="ebw:BWG_1597"/>
<dbReference type="HOGENOM" id="CLU_049702_0_0_6"/>
<dbReference type="HAMAP" id="MF_01232">
    <property type="entry name" value="UPF0229"/>
    <property type="match status" value="1"/>
</dbReference>
<dbReference type="InterPro" id="IPR006698">
    <property type="entry name" value="UPF0229"/>
</dbReference>
<dbReference type="NCBIfam" id="NF003707">
    <property type="entry name" value="PRK05325.1-2"/>
    <property type="match status" value="1"/>
</dbReference>
<dbReference type="NCBIfam" id="NF003708">
    <property type="entry name" value="PRK05325.1-3"/>
    <property type="match status" value="1"/>
</dbReference>
<dbReference type="PANTHER" id="PTHR30510">
    <property type="entry name" value="UPF0229 PROTEIN YEAH"/>
    <property type="match status" value="1"/>
</dbReference>
<dbReference type="PANTHER" id="PTHR30510:SF2">
    <property type="entry name" value="UPF0229 PROTEIN YEAH"/>
    <property type="match status" value="1"/>
</dbReference>
<dbReference type="Pfam" id="PF04285">
    <property type="entry name" value="DUF444"/>
    <property type="match status" value="1"/>
</dbReference>
<gene>
    <name evidence="1" type="primary">yeaH</name>
    <name type="ordered locus">BWG_1597</name>
</gene>